<dbReference type="EC" id="2.5.1.7" evidence="1"/>
<dbReference type="EMBL" id="CP000096">
    <property type="protein sequence ID" value="ABB23444.1"/>
    <property type="molecule type" value="Genomic_DNA"/>
</dbReference>
<dbReference type="RefSeq" id="WP_011357319.1">
    <property type="nucleotide sequence ID" value="NC_007512.1"/>
</dbReference>
<dbReference type="SMR" id="Q3B5D7"/>
<dbReference type="STRING" id="319225.Plut_0561"/>
<dbReference type="KEGG" id="plt:Plut_0561"/>
<dbReference type="eggNOG" id="COG0766">
    <property type="taxonomic scope" value="Bacteria"/>
</dbReference>
<dbReference type="HOGENOM" id="CLU_027387_0_0_10"/>
<dbReference type="OrthoDB" id="9803760at2"/>
<dbReference type="UniPathway" id="UPA00219"/>
<dbReference type="Proteomes" id="UP000002709">
    <property type="component" value="Chromosome"/>
</dbReference>
<dbReference type="GO" id="GO:0005737">
    <property type="term" value="C:cytoplasm"/>
    <property type="evidence" value="ECO:0007669"/>
    <property type="project" value="UniProtKB-SubCell"/>
</dbReference>
<dbReference type="GO" id="GO:0008760">
    <property type="term" value="F:UDP-N-acetylglucosamine 1-carboxyvinyltransferase activity"/>
    <property type="evidence" value="ECO:0007669"/>
    <property type="project" value="UniProtKB-UniRule"/>
</dbReference>
<dbReference type="GO" id="GO:0051301">
    <property type="term" value="P:cell division"/>
    <property type="evidence" value="ECO:0007669"/>
    <property type="project" value="UniProtKB-KW"/>
</dbReference>
<dbReference type="GO" id="GO:0071555">
    <property type="term" value="P:cell wall organization"/>
    <property type="evidence" value="ECO:0007669"/>
    <property type="project" value="UniProtKB-KW"/>
</dbReference>
<dbReference type="GO" id="GO:0009252">
    <property type="term" value="P:peptidoglycan biosynthetic process"/>
    <property type="evidence" value="ECO:0007669"/>
    <property type="project" value="UniProtKB-UniRule"/>
</dbReference>
<dbReference type="GO" id="GO:0008360">
    <property type="term" value="P:regulation of cell shape"/>
    <property type="evidence" value="ECO:0007669"/>
    <property type="project" value="UniProtKB-KW"/>
</dbReference>
<dbReference type="GO" id="GO:0019277">
    <property type="term" value="P:UDP-N-acetylgalactosamine biosynthetic process"/>
    <property type="evidence" value="ECO:0007669"/>
    <property type="project" value="InterPro"/>
</dbReference>
<dbReference type="CDD" id="cd01555">
    <property type="entry name" value="UdpNAET"/>
    <property type="match status" value="1"/>
</dbReference>
<dbReference type="FunFam" id="3.65.10.10:FF:000001">
    <property type="entry name" value="UDP-N-acetylglucosamine 1-carboxyvinyltransferase"/>
    <property type="match status" value="1"/>
</dbReference>
<dbReference type="Gene3D" id="3.65.10.10">
    <property type="entry name" value="Enolpyruvate transferase domain"/>
    <property type="match status" value="2"/>
</dbReference>
<dbReference type="HAMAP" id="MF_00111">
    <property type="entry name" value="MurA"/>
    <property type="match status" value="1"/>
</dbReference>
<dbReference type="InterPro" id="IPR001986">
    <property type="entry name" value="Enolpyruvate_Tfrase_dom"/>
</dbReference>
<dbReference type="InterPro" id="IPR036968">
    <property type="entry name" value="Enolpyruvate_Tfrase_sf"/>
</dbReference>
<dbReference type="InterPro" id="IPR050068">
    <property type="entry name" value="MurA_subfamily"/>
</dbReference>
<dbReference type="InterPro" id="IPR013792">
    <property type="entry name" value="RNA3'P_cycl/enolpyr_Trfase_a/b"/>
</dbReference>
<dbReference type="InterPro" id="IPR005750">
    <property type="entry name" value="UDP_GlcNAc_COvinyl_MurA"/>
</dbReference>
<dbReference type="NCBIfam" id="TIGR01072">
    <property type="entry name" value="murA"/>
    <property type="match status" value="1"/>
</dbReference>
<dbReference type="NCBIfam" id="NF006873">
    <property type="entry name" value="PRK09369.1"/>
    <property type="match status" value="1"/>
</dbReference>
<dbReference type="PANTHER" id="PTHR43783">
    <property type="entry name" value="UDP-N-ACETYLGLUCOSAMINE 1-CARBOXYVINYLTRANSFERASE"/>
    <property type="match status" value="1"/>
</dbReference>
<dbReference type="PANTHER" id="PTHR43783:SF1">
    <property type="entry name" value="UDP-N-ACETYLGLUCOSAMINE 1-CARBOXYVINYLTRANSFERASE"/>
    <property type="match status" value="1"/>
</dbReference>
<dbReference type="Pfam" id="PF00275">
    <property type="entry name" value="EPSP_synthase"/>
    <property type="match status" value="1"/>
</dbReference>
<dbReference type="SUPFAM" id="SSF55205">
    <property type="entry name" value="EPT/RTPC-like"/>
    <property type="match status" value="1"/>
</dbReference>
<organism>
    <name type="scientific">Chlorobium luteolum (strain DSM 273 / BCRC 81028 / 2530)</name>
    <name type="common">Pelodictyon luteolum</name>
    <dbReference type="NCBI Taxonomy" id="319225"/>
    <lineage>
        <taxon>Bacteria</taxon>
        <taxon>Pseudomonadati</taxon>
        <taxon>Chlorobiota</taxon>
        <taxon>Chlorobiia</taxon>
        <taxon>Chlorobiales</taxon>
        <taxon>Chlorobiaceae</taxon>
        <taxon>Chlorobium/Pelodictyon group</taxon>
        <taxon>Pelodictyon</taxon>
    </lineage>
</organism>
<comment type="function">
    <text evidence="1">Cell wall formation. Adds enolpyruvyl to UDP-N-acetylglucosamine.</text>
</comment>
<comment type="catalytic activity">
    <reaction evidence="1">
        <text>phosphoenolpyruvate + UDP-N-acetyl-alpha-D-glucosamine = UDP-N-acetyl-3-O-(1-carboxyvinyl)-alpha-D-glucosamine + phosphate</text>
        <dbReference type="Rhea" id="RHEA:18681"/>
        <dbReference type="ChEBI" id="CHEBI:43474"/>
        <dbReference type="ChEBI" id="CHEBI:57705"/>
        <dbReference type="ChEBI" id="CHEBI:58702"/>
        <dbReference type="ChEBI" id="CHEBI:68483"/>
        <dbReference type="EC" id="2.5.1.7"/>
    </reaction>
</comment>
<comment type="pathway">
    <text evidence="1">Cell wall biogenesis; peptidoglycan biosynthesis.</text>
</comment>
<comment type="subcellular location">
    <subcellularLocation>
        <location evidence="1">Cytoplasm</location>
    </subcellularLocation>
</comment>
<comment type="similarity">
    <text evidence="1">Belongs to the EPSP synthase family. MurA subfamily.</text>
</comment>
<accession>Q3B5D7</accession>
<reference key="1">
    <citation type="submission" date="2005-08" db="EMBL/GenBank/DDBJ databases">
        <title>Complete sequence of Pelodictyon luteolum DSM 273.</title>
        <authorList>
            <consortium name="US DOE Joint Genome Institute"/>
            <person name="Copeland A."/>
            <person name="Lucas S."/>
            <person name="Lapidus A."/>
            <person name="Barry K."/>
            <person name="Detter J.C."/>
            <person name="Glavina T."/>
            <person name="Hammon N."/>
            <person name="Israni S."/>
            <person name="Pitluck S."/>
            <person name="Bryant D."/>
            <person name="Schmutz J."/>
            <person name="Larimer F."/>
            <person name="Land M."/>
            <person name="Kyrpides N."/>
            <person name="Ivanova N."/>
            <person name="Richardson P."/>
        </authorList>
    </citation>
    <scope>NUCLEOTIDE SEQUENCE [LARGE SCALE GENOMIC DNA]</scope>
    <source>
        <strain>DSM 273 / BCRC 81028 / 2530</strain>
    </source>
</reference>
<name>MURA_CHLL3</name>
<protein>
    <recommendedName>
        <fullName evidence="1">UDP-N-acetylglucosamine 1-carboxyvinyltransferase</fullName>
        <ecNumber evidence="1">2.5.1.7</ecNumber>
    </recommendedName>
    <alternativeName>
        <fullName evidence="1">Enoylpyruvate transferase</fullName>
    </alternativeName>
    <alternativeName>
        <fullName evidence="1">UDP-N-acetylglucosamine enolpyruvyl transferase</fullName>
        <shortName evidence="1">EPT</shortName>
    </alternativeName>
</protein>
<gene>
    <name evidence="1" type="primary">murA</name>
    <name type="ordered locus">Plut_0561</name>
</gene>
<proteinExistence type="inferred from homology"/>
<evidence type="ECO:0000255" key="1">
    <source>
        <dbReference type="HAMAP-Rule" id="MF_00111"/>
    </source>
</evidence>
<keyword id="KW-0131">Cell cycle</keyword>
<keyword id="KW-0132">Cell division</keyword>
<keyword id="KW-0133">Cell shape</keyword>
<keyword id="KW-0961">Cell wall biogenesis/degradation</keyword>
<keyword id="KW-0963">Cytoplasm</keyword>
<keyword id="KW-0573">Peptidoglycan synthesis</keyword>
<keyword id="KW-0670">Pyruvate</keyword>
<keyword id="KW-1185">Reference proteome</keyword>
<keyword id="KW-0808">Transferase</keyword>
<feature type="chain" id="PRO_0000231236" description="UDP-N-acetylglucosamine 1-carboxyvinyltransferase">
    <location>
        <begin position="1"/>
        <end position="424"/>
    </location>
</feature>
<feature type="active site" description="Proton donor" evidence="1">
    <location>
        <position position="117"/>
    </location>
</feature>
<feature type="binding site" evidence="1">
    <location>
        <begin position="22"/>
        <end position="23"/>
    </location>
    <ligand>
        <name>phosphoenolpyruvate</name>
        <dbReference type="ChEBI" id="CHEBI:58702"/>
    </ligand>
</feature>
<feature type="binding site" evidence="1">
    <location>
        <position position="93"/>
    </location>
    <ligand>
        <name>UDP-N-acetyl-alpha-D-glucosamine</name>
        <dbReference type="ChEBI" id="CHEBI:57705"/>
    </ligand>
</feature>
<feature type="binding site" evidence="1">
    <location>
        <begin position="122"/>
        <end position="126"/>
    </location>
    <ligand>
        <name>UDP-N-acetyl-alpha-D-glucosamine</name>
        <dbReference type="ChEBI" id="CHEBI:57705"/>
    </ligand>
</feature>
<feature type="binding site" evidence="1">
    <location>
        <position position="307"/>
    </location>
    <ligand>
        <name>UDP-N-acetyl-alpha-D-glucosamine</name>
        <dbReference type="ChEBI" id="CHEBI:57705"/>
    </ligand>
</feature>
<feature type="binding site" evidence="1">
    <location>
        <position position="329"/>
    </location>
    <ligand>
        <name>UDP-N-acetyl-alpha-D-glucosamine</name>
        <dbReference type="ChEBI" id="CHEBI:57705"/>
    </ligand>
</feature>
<feature type="modified residue" description="2-(S-cysteinyl)pyruvic acid O-phosphothioketal" evidence="1">
    <location>
        <position position="117"/>
    </location>
</feature>
<sequence>MDKLVITGGKRIEGEITASGSKNSSLPIIAATLLSGSGTFTLHRIPDLQDITTFRQLFDHLGAETAFSHNTLTITTANVQSVLAPYELVKKMRASIYVLGPLLARFGHARVSLPGGCAFGPRPIDLHLMAMEKLGARITIETGFIDAVAEGGRLKGATIDFPVSSVGATGNALMAAVLAEGTTIIRNAAAEPEIEALCHFLQAMGADIRGTGTTELIIHGCDSLRHVEFSNIFDRIEAGTILAAAAITGGSVTIRGVIPSHMESVLQKFSDAGCRIETTDDTVILKSTGRLKATDITAEPFPAFPTDMQAQWMALMTQAEGTSEITDHVYHERFNHIPELNRLGAHIDIEGNRAVVHGPQALSGTKVMSTDLRASASLVLAGLVAEGTTEVLRVYHLDRGYERIETRLQNLGAEIKREKYSEFG</sequence>